<feature type="chain" id="PRO_0000387805" description="4-hydroxy-2-oxovalerate aldolase 1">
    <location>
        <begin position="1"/>
        <end position="355"/>
    </location>
</feature>
<feature type="domain" description="Pyruvate carboxyltransferase" evidence="1">
    <location>
        <begin position="8"/>
        <end position="260"/>
    </location>
</feature>
<feature type="active site" description="Proton acceptor" evidence="1">
    <location>
        <position position="20"/>
    </location>
</feature>
<feature type="binding site" evidence="1">
    <location>
        <begin position="16"/>
        <end position="17"/>
    </location>
    <ligand>
        <name>substrate</name>
    </ligand>
</feature>
<feature type="binding site" evidence="1">
    <location>
        <position position="17"/>
    </location>
    <ligand>
        <name>Mn(2+)</name>
        <dbReference type="ChEBI" id="CHEBI:29035"/>
    </ligand>
</feature>
<feature type="binding site" evidence="1">
    <location>
        <position position="170"/>
    </location>
    <ligand>
        <name>substrate</name>
    </ligand>
</feature>
<feature type="binding site" evidence="1">
    <location>
        <position position="199"/>
    </location>
    <ligand>
        <name>Mn(2+)</name>
        <dbReference type="ChEBI" id="CHEBI:29035"/>
    </ligand>
</feature>
<feature type="binding site" evidence="1">
    <location>
        <position position="199"/>
    </location>
    <ligand>
        <name>substrate</name>
    </ligand>
</feature>
<feature type="binding site" evidence="1">
    <location>
        <position position="201"/>
    </location>
    <ligand>
        <name>Mn(2+)</name>
        <dbReference type="ChEBI" id="CHEBI:29035"/>
    </ligand>
</feature>
<feature type="binding site" evidence="1">
    <location>
        <position position="290"/>
    </location>
    <ligand>
        <name>substrate</name>
    </ligand>
</feature>
<feature type="site" description="Transition state stabilizer" evidence="1">
    <location>
        <position position="16"/>
    </location>
</feature>
<gene>
    <name type="ordered locus">Bcep18194_B1188</name>
</gene>
<organism>
    <name type="scientific">Burkholderia lata (strain ATCC 17760 / DSM 23089 / LMG 22485 / NCIMB 9086 / R18194 / 383)</name>
    <dbReference type="NCBI Taxonomy" id="482957"/>
    <lineage>
        <taxon>Bacteria</taxon>
        <taxon>Pseudomonadati</taxon>
        <taxon>Pseudomonadota</taxon>
        <taxon>Betaproteobacteria</taxon>
        <taxon>Burkholderiales</taxon>
        <taxon>Burkholderiaceae</taxon>
        <taxon>Burkholderia</taxon>
        <taxon>Burkholderia cepacia complex</taxon>
    </lineage>
</organism>
<evidence type="ECO:0000255" key="1">
    <source>
        <dbReference type="HAMAP-Rule" id="MF_01656"/>
    </source>
</evidence>
<comment type="catalytic activity">
    <reaction evidence="1">
        <text>(S)-4-hydroxy-2-oxopentanoate = acetaldehyde + pyruvate</text>
        <dbReference type="Rhea" id="RHEA:22624"/>
        <dbReference type="ChEBI" id="CHEBI:15343"/>
        <dbReference type="ChEBI" id="CHEBI:15361"/>
        <dbReference type="ChEBI" id="CHEBI:73143"/>
        <dbReference type="EC" id="4.1.3.39"/>
    </reaction>
</comment>
<comment type="similarity">
    <text evidence="1">Belongs to the 4-hydroxy-2-oxovalerate aldolase family.</text>
</comment>
<reference key="1">
    <citation type="submission" date="2005-10" db="EMBL/GenBank/DDBJ databases">
        <title>Complete sequence of chromosome 2 of Burkholderia sp. 383.</title>
        <authorList>
            <consortium name="US DOE Joint Genome Institute"/>
            <person name="Copeland A."/>
            <person name="Lucas S."/>
            <person name="Lapidus A."/>
            <person name="Barry K."/>
            <person name="Detter J.C."/>
            <person name="Glavina T."/>
            <person name="Hammon N."/>
            <person name="Israni S."/>
            <person name="Pitluck S."/>
            <person name="Chain P."/>
            <person name="Malfatti S."/>
            <person name="Shin M."/>
            <person name="Vergez L."/>
            <person name="Schmutz J."/>
            <person name="Larimer F."/>
            <person name="Land M."/>
            <person name="Kyrpides N."/>
            <person name="Lykidis A."/>
            <person name="Richardson P."/>
        </authorList>
    </citation>
    <scope>NUCLEOTIDE SEQUENCE [LARGE SCALE GENOMIC DNA]</scope>
    <source>
        <strain>ATCC 17760 / DSM 23089 / LMG 22485 / NCIMB 9086 / R18194 / 383</strain>
    </source>
</reference>
<accession>Q397Q9</accession>
<keyword id="KW-0058">Aromatic hydrocarbons catabolism</keyword>
<keyword id="KW-0456">Lyase</keyword>
<keyword id="KW-0464">Manganese</keyword>
<keyword id="KW-0479">Metal-binding</keyword>
<sequence length="355" mass="38373">MNDARKKLYISDVTLRDGSHAIRHQYSIANVKAIAAALDRAGVDSIEVAHGDGIEGSSFNYGFGAHSDVEWIEAAAASVKHAKIATLLIPGIGTIHDLRNAYDAGARVVRVATHCTEADVSRQHLEYAREIGMDPVGFLMMSHMTTPQKLAEQAKLMESYGATCVYVVDSGGALGMNDIRDRFRAFKEALKPETQTGMHAHHNLSLGVANSLVAVEEGCDRIDASLAGMGAGAGNAPLEVFIAAAERQGWHHGCDLYGLMDAADDIVRPLQDRPVRVDRETLALGYAGVYSSFLRHAERAADKYGLKTVDILVELGRRKMVGGQEDMIVDVALDLLKSAEHERTHAEPTMSEAGR</sequence>
<name>HOA1_BURL3</name>
<dbReference type="EC" id="4.1.3.39" evidence="1"/>
<dbReference type="EMBL" id="CP000152">
    <property type="protein sequence ID" value="ABB11302.1"/>
    <property type="molecule type" value="Genomic_DNA"/>
</dbReference>
<dbReference type="RefSeq" id="WP_011354793.1">
    <property type="nucleotide sequence ID" value="NC_007511.1"/>
</dbReference>
<dbReference type="SMR" id="Q397Q9"/>
<dbReference type="GeneID" id="45097538"/>
<dbReference type="KEGG" id="bur:Bcep18194_B1188"/>
<dbReference type="PATRIC" id="fig|482957.22.peg.4858"/>
<dbReference type="HOGENOM" id="CLU_049173_0_0_4"/>
<dbReference type="Proteomes" id="UP000002705">
    <property type="component" value="Chromosome 2"/>
</dbReference>
<dbReference type="GO" id="GO:0003852">
    <property type="term" value="F:2-isopropylmalate synthase activity"/>
    <property type="evidence" value="ECO:0007669"/>
    <property type="project" value="TreeGrafter"/>
</dbReference>
<dbReference type="GO" id="GO:0008701">
    <property type="term" value="F:4-hydroxy-2-oxovalerate aldolase activity"/>
    <property type="evidence" value="ECO:0007669"/>
    <property type="project" value="UniProtKB-UniRule"/>
</dbReference>
<dbReference type="GO" id="GO:0030145">
    <property type="term" value="F:manganese ion binding"/>
    <property type="evidence" value="ECO:0007669"/>
    <property type="project" value="UniProtKB-UniRule"/>
</dbReference>
<dbReference type="GO" id="GO:0009056">
    <property type="term" value="P:catabolic process"/>
    <property type="evidence" value="ECO:0007669"/>
    <property type="project" value="UniProtKB-KW"/>
</dbReference>
<dbReference type="GO" id="GO:0009098">
    <property type="term" value="P:L-leucine biosynthetic process"/>
    <property type="evidence" value="ECO:0007669"/>
    <property type="project" value="TreeGrafter"/>
</dbReference>
<dbReference type="CDD" id="cd07943">
    <property type="entry name" value="DRE_TIM_HOA"/>
    <property type="match status" value="1"/>
</dbReference>
<dbReference type="FunFam" id="1.10.8.60:FF:000042">
    <property type="entry name" value="4-hydroxy-2-oxovalerate aldolase"/>
    <property type="match status" value="1"/>
</dbReference>
<dbReference type="Gene3D" id="1.10.8.60">
    <property type="match status" value="1"/>
</dbReference>
<dbReference type="Gene3D" id="3.20.20.70">
    <property type="entry name" value="Aldolase class I"/>
    <property type="match status" value="1"/>
</dbReference>
<dbReference type="HAMAP" id="MF_01656">
    <property type="entry name" value="HOA"/>
    <property type="match status" value="1"/>
</dbReference>
<dbReference type="InterPro" id="IPR050073">
    <property type="entry name" value="2-IPM_HCS-like"/>
</dbReference>
<dbReference type="InterPro" id="IPR017629">
    <property type="entry name" value="4OH_2_O-val_aldolase"/>
</dbReference>
<dbReference type="InterPro" id="IPR013785">
    <property type="entry name" value="Aldolase_TIM"/>
</dbReference>
<dbReference type="InterPro" id="IPR012425">
    <property type="entry name" value="DmpG_comm"/>
</dbReference>
<dbReference type="InterPro" id="IPR035685">
    <property type="entry name" value="DRE_TIM_HOA"/>
</dbReference>
<dbReference type="InterPro" id="IPR000891">
    <property type="entry name" value="PYR_CT"/>
</dbReference>
<dbReference type="NCBIfam" id="TIGR03217">
    <property type="entry name" value="4OH_2_O_val_ald"/>
    <property type="match status" value="1"/>
</dbReference>
<dbReference type="NCBIfam" id="NF006049">
    <property type="entry name" value="PRK08195.1"/>
    <property type="match status" value="1"/>
</dbReference>
<dbReference type="PANTHER" id="PTHR10277:SF9">
    <property type="entry name" value="2-ISOPROPYLMALATE SYNTHASE 1, CHLOROPLASTIC-RELATED"/>
    <property type="match status" value="1"/>
</dbReference>
<dbReference type="PANTHER" id="PTHR10277">
    <property type="entry name" value="HOMOCITRATE SYNTHASE-RELATED"/>
    <property type="match status" value="1"/>
</dbReference>
<dbReference type="Pfam" id="PF07836">
    <property type="entry name" value="DmpG_comm"/>
    <property type="match status" value="1"/>
</dbReference>
<dbReference type="Pfam" id="PF00682">
    <property type="entry name" value="HMGL-like"/>
    <property type="match status" value="1"/>
</dbReference>
<dbReference type="SUPFAM" id="SSF51569">
    <property type="entry name" value="Aldolase"/>
    <property type="match status" value="1"/>
</dbReference>
<dbReference type="SUPFAM" id="SSF89000">
    <property type="entry name" value="post-HMGL domain-like"/>
    <property type="match status" value="1"/>
</dbReference>
<dbReference type="PROSITE" id="PS50991">
    <property type="entry name" value="PYR_CT"/>
    <property type="match status" value="1"/>
</dbReference>
<protein>
    <recommendedName>
        <fullName evidence="1">4-hydroxy-2-oxovalerate aldolase 1</fullName>
        <shortName evidence="1">HOA 1</shortName>
        <ecNumber evidence="1">4.1.3.39</ecNumber>
    </recommendedName>
    <alternativeName>
        <fullName evidence="1">4-hydroxy-2-keto-pentanoic acid aldolase 1</fullName>
    </alternativeName>
    <alternativeName>
        <fullName evidence="1">4-hydroxy-2-oxopentanoate aldolase 1</fullName>
    </alternativeName>
</protein>
<proteinExistence type="inferred from homology"/>